<keyword id="KW-0028">Amino-acid biosynthesis</keyword>
<keyword id="KW-0067">ATP-binding</keyword>
<keyword id="KW-0963">Cytoplasm</keyword>
<keyword id="KW-0368">Histidine biosynthesis</keyword>
<keyword id="KW-0378">Hydrolase</keyword>
<keyword id="KW-0547">Nucleotide-binding</keyword>
<accession>A9VLH9</accession>
<protein>
    <recommendedName>
        <fullName evidence="1">Phosphoribosyl-ATP pyrophosphatase</fullName>
        <shortName evidence="1">PRA-PH</shortName>
        <ecNumber evidence="1">3.6.1.31</ecNumber>
    </recommendedName>
</protein>
<organism>
    <name type="scientific">Bacillus mycoides (strain KBAB4)</name>
    <name type="common">Bacillus weihenstephanensis</name>
    <dbReference type="NCBI Taxonomy" id="315730"/>
    <lineage>
        <taxon>Bacteria</taxon>
        <taxon>Bacillati</taxon>
        <taxon>Bacillota</taxon>
        <taxon>Bacilli</taxon>
        <taxon>Bacillales</taxon>
        <taxon>Bacillaceae</taxon>
        <taxon>Bacillus</taxon>
        <taxon>Bacillus cereus group</taxon>
    </lineage>
</organism>
<comment type="catalytic activity">
    <reaction evidence="1">
        <text>1-(5-phospho-beta-D-ribosyl)-ATP + H2O = 1-(5-phospho-beta-D-ribosyl)-5'-AMP + diphosphate + H(+)</text>
        <dbReference type="Rhea" id="RHEA:22828"/>
        <dbReference type="ChEBI" id="CHEBI:15377"/>
        <dbReference type="ChEBI" id="CHEBI:15378"/>
        <dbReference type="ChEBI" id="CHEBI:33019"/>
        <dbReference type="ChEBI" id="CHEBI:59457"/>
        <dbReference type="ChEBI" id="CHEBI:73183"/>
        <dbReference type="EC" id="3.6.1.31"/>
    </reaction>
</comment>
<comment type="pathway">
    <text evidence="1">Amino-acid biosynthesis; L-histidine biosynthesis; L-histidine from 5-phospho-alpha-D-ribose 1-diphosphate: step 2/9.</text>
</comment>
<comment type="subcellular location">
    <subcellularLocation>
        <location evidence="1">Cytoplasm</location>
    </subcellularLocation>
</comment>
<comment type="similarity">
    <text evidence="1">Belongs to the PRA-PH family.</text>
</comment>
<reference key="1">
    <citation type="journal article" date="2008" name="Chem. Biol. Interact.">
        <title>Extending the Bacillus cereus group genomics to putative food-borne pathogens of different toxicity.</title>
        <authorList>
            <person name="Lapidus A."/>
            <person name="Goltsman E."/>
            <person name="Auger S."/>
            <person name="Galleron N."/>
            <person name="Segurens B."/>
            <person name="Dossat C."/>
            <person name="Land M.L."/>
            <person name="Broussolle V."/>
            <person name="Brillard J."/>
            <person name="Guinebretiere M.-H."/>
            <person name="Sanchis V."/>
            <person name="Nguen-the C."/>
            <person name="Lereclus D."/>
            <person name="Richardson P."/>
            <person name="Wincker P."/>
            <person name="Weissenbach J."/>
            <person name="Ehrlich S.D."/>
            <person name="Sorokin A."/>
        </authorList>
    </citation>
    <scope>NUCLEOTIDE SEQUENCE [LARGE SCALE GENOMIC DNA]</scope>
    <source>
        <strain>KBAB4</strain>
    </source>
</reference>
<sequence length="107" mass="12554">MEDILKLLFETIEERKKNPLSESYTNYLFSKGEDKILKKIGEECTEVIIASKNNDKEEIVKEMVDVFYHCFVLLAEKNIPLEDVMQEVKERNGKLSRVGDRREIDTL</sequence>
<proteinExistence type="inferred from homology"/>
<evidence type="ECO:0000255" key="1">
    <source>
        <dbReference type="HAMAP-Rule" id="MF_01020"/>
    </source>
</evidence>
<name>HIS2_BACMK</name>
<gene>
    <name evidence="1" type="primary">hisE</name>
    <name type="ordered locus">BcerKBAB4_1334</name>
</gene>
<dbReference type="EC" id="3.6.1.31" evidence="1"/>
<dbReference type="EMBL" id="CP000903">
    <property type="protein sequence ID" value="ABY42581.1"/>
    <property type="molecule type" value="Genomic_DNA"/>
</dbReference>
<dbReference type="RefSeq" id="WP_002011702.1">
    <property type="nucleotide sequence ID" value="NC_010184.1"/>
</dbReference>
<dbReference type="SMR" id="A9VLH9"/>
<dbReference type="GeneID" id="66263537"/>
<dbReference type="KEGG" id="bwe:BcerKBAB4_1334"/>
<dbReference type="eggNOG" id="COG0140">
    <property type="taxonomic scope" value="Bacteria"/>
</dbReference>
<dbReference type="HOGENOM" id="CLU_123337_0_0_9"/>
<dbReference type="UniPathway" id="UPA00031">
    <property type="reaction ID" value="UER00007"/>
</dbReference>
<dbReference type="Proteomes" id="UP000002154">
    <property type="component" value="Chromosome"/>
</dbReference>
<dbReference type="GO" id="GO:0005737">
    <property type="term" value="C:cytoplasm"/>
    <property type="evidence" value="ECO:0007669"/>
    <property type="project" value="UniProtKB-SubCell"/>
</dbReference>
<dbReference type="GO" id="GO:0005524">
    <property type="term" value="F:ATP binding"/>
    <property type="evidence" value="ECO:0007669"/>
    <property type="project" value="UniProtKB-KW"/>
</dbReference>
<dbReference type="GO" id="GO:0004636">
    <property type="term" value="F:phosphoribosyl-ATP diphosphatase activity"/>
    <property type="evidence" value="ECO:0007669"/>
    <property type="project" value="UniProtKB-UniRule"/>
</dbReference>
<dbReference type="GO" id="GO:0000105">
    <property type="term" value="P:L-histidine biosynthetic process"/>
    <property type="evidence" value="ECO:0007669"/>
    <property type="project" value="UniProtKB-UniRule"/>
</dbReference>
<dbReference type="CDD" id="cd11534">
    <property type="entry name" value="NTP-PPase_HisIE_like"/>
    <property type="match status" value="1"/>
</dbReference>
<dbReference type="Gene3D" id="1.10.287.1080">
    <property type="entry name" value="MazG-like"/>
    <property type="match status" value="1"/>
</dbReference>
<dbReference type="HAMAP" id="MF_01020">
    <property type="entry name" value="HisE"/>
    <property type="match status" value="1"/>
</dbReference>
<dbReference type="InterPro" id="IPR008179">
    <property type="entry name" value="HisE"/>
</dbReference>
<dbReference type="InterPro" id="IPR021130">
    <property type="entry name" value="PRib-ATP_PPHydrolase-like"/>
</dbReference>
<dbReference type="NCBIfam" id="TIGR03188">
    <property type="entry name" value="histidine_hisI"/>
    <property type="match status" value="1"/>
</dbReference>
<dbReference type="NCBIfam" id="NF001611">
    <property type="entry name" value="PRK00400.1-3"/>
    <property type="match status" value="1"/>
</dbReference>
<dbReference type="PANTHER" id="PTHR42945">
    <property type="entry name" value="HISTIDINE BIOSYNTHESIS BIFUNCTIONAL PROTEIN"/>
    <property type="match status" value="1"/>
</dbReference>
<dbReference type="PANTHER" id="PTHR42945:SF9">
    <property type="entry name" value="HISTIDINE BIOSYNTHESIS BIFUNCTIONAL PROTEIN HISIE"/>
    <property type="match status" value="1"/>
</dbReference>
<dbReference type="Pfam" id="PF01503">
    <property type="entry name" value="PRA-PH"/>
    <property type="match status" value="1"/>
</dbReference>
<dbReference type="SUPFAM" id="SSF101386">
    <property type="entry name" value="all-alpha NTP pyrophosphatases"/>
    <property type="match status" value="1"/>
</dbReference>
<feature type="chain" id="PRO_1000135301" description="Phosphoribosyl-ATP pyrophosphatase">
    <location>
        <begin position="1"/>
        <end position="107"/>
    </location>
</feature>